<keyword id="KW-0378">Hydrolase</keyword>
<keyword id="KW-0460">Magnesium</keyword>
<keyword id="KW-0479">Metal-binding</keyword>
<keyword id="KW-0546">Nucleotide metabolism</keyword>
<keyword id="KW-0547">Nucleotide-binding</keyword>
<feature type="chain" id="PRO_0000178149" description="dITP/XTP pyrophosphatase">
    <location>
        <begin position="1"/>
        <end position="209"/>
    </location>
</feature>
<feature type="active site" description="Proton acceptor" evidence="1">
    <location>
        <position position="70"/>
    </location>
</feature>
<feature type="binding site" evidence="1">
    <location>
        <begin position="7"/>
        <end position="12"/>
    </location>
    <ligand>
        <name>substrate</name>
    </ligand>
</feature>
<feature type="binding site" evidence="1">
    <location>
        <position position="70"/>
    </location>
    <ligand>
        <name>Mg(2+)</name>
        <dbReference type="ChEBI" id="CHEBI:18420"/>
    </ligand>
</feature>
<feature type="binding site" evidence="1">
    <location>
        <position position="71"/>
    </location>
    <ligand>
        <name>substrate</name>
    </ligand>
</feature>
<feature type="binding site" evidence="1">
    <location>
        <begin position="154"/>
        <end position="157"/>
    </location>
    <ligand>
        <name>substrate</name>
    </ligand>
</feature>
<feature type="binding site" evidence="1">
    <location>
        <position position="177"/>
    </location>
    <ligand>
        <name>substrate</name>
    </ligand>
</feature>
<feature type="binding site" evidence="1">
    <location>
        <begin position="182"/>
        <end position="183"/>
    </location>
    <ligand>
        <name>substrate</name>
    </ligand>
</feature>
<gene>
    <name type="ordered locus">TC_0895</name>
</gene>
<evidence type="ECO:0000255" key="1">
    <source>
        <dbReference type="HAMAP-Rule" id="MF_01405"/>
    </source>
</evidence>
<proteinExistence type="inferred from homology"/>
<comment type="function">
    <text evidence="1">Pyrophosphatase that catalyzes the hydrolysis of nucleoside triphosphates to their monophosphate derivatives, with a high preference for the non-canonical purine nucleotides XTP (xanthosine triphosphate), dITP (deoxyinosine triphosphate) and ITP. Seems to function as a house-cleaning enzyme that removes non-canonical purine nucleotides from the nucleotide pool, thus preventing their incorporation into DNA/RNA and avoiding chromosomal lesions.</text>
</comment>
<comment type="catalytic activity">
    <reaction evidence="1">
        <text>XTP + H2O = XMP + diphosphate + H(+)</text>
        <dbReference type="Rhea" id="RHEA:28610"/>
        <dbReference type="ChEBI" id="CHEBI:15377"/>
        <dbReference type="ChEBI" id="CHEBI:15378"/>
        <dbReference type="ChEBI" id="CHEBI:33019"/>
        <dbReference type="ChEBI" id="CHEBI:57464"/>
        <dbReference type="ChEBI" id="CHEBI:61314"/>
        <dbReference type="EC" id="3.6.1.66"/>
    </reaction>
</comment>
<comment type="catalytic activity">
    <reaction evidence="1">
        <text>dITP + H2O = dIMP + diphosphate + H(+)</text>
        <dbReference type="Rhea" id="RHEA:28342"/>
        <dbReference type="ChEBI" id="CHEBI:15377"/>
        <dbReference type="ChEBI" id="CHEBI:15378"/>
        <dbReference type="ChEBI" id="CHEBI:33019"/>
        <dbReference type="ChEBI" id="CHEBI:61194"/>
        <dbReference type="ChEBI" id="CHEBI:61382"/>
        <dbReference type="EC" id="3.6.1.66"/>
    </reaction>
</comment>
<comment type="catalytic activity">
    <reaction evidence="1">
        <text>ITP + H2O = IMP + diphosphate + H(+)</text>
        <dbReference type="Rhea" id="RHEA:29399"/>
        <dbReference type="ChEBI" id="CHEBI:15377"/>
        <dbReference type="ChEBI" id="CHEBI:15378"/>
        <dbReference type="ChEBI" id="CHEBI:33019"/>
        <dbReference type="ChEBI" id="CHEBI:58053"/>
        <dbReference type="ChEBI" id="CHEBI:61402"/>
        <dbReference type="EC" id="3.6.1.66"/>
    </reaction>
</comment>
<comment type="cofactor">
    <cofactor evidence="1">
        <name>Mg(2+)</name>
        <dbReference type="ChEBI" id="CHEBI:18420"/>
    </cofactor>
    <text evidence="1">Binds 1 Mg(2+) ion per subunit.</text>
</comment>
<comment type="subunit">
    <text evidence="1">Homodimer.</text>
</comment>
<comment type="similarity">
    <text evidence="1">Belongs to the HAM1 NTPase family.</text>
</comment>
<reference key="1">
    <citation type="journal article" date="2000" name="Nucleic Acids Res.">
        <title>Genome sequences of Chlamydia trachomatis MoPn and Chlamydia pneumoniae AR39.</title>
        <authorList>
            <person name="Read T.D."/>
            <person name="Brunham R.C."/>
            <person name="Shen C."/>
            <person name="Gill S.R."/>
            <person name="Heidelberg J.F."/>
            <person name="White O."/>
            <person name="Hickey E.K."/>
            <person name="Peterson J.D."/>
            <person name="Utterback T.R."/>
            <person name="Berry K.J."/>
            <person name="Bass S."/>
            <person name="Linher K.D."/>
            <person name="Weidman J.F."/>
            <person name="Khouri H.M."/>
            <person name="Craven B."/>
            <person name="Bowman C."/>
            <person name="Dodson R.J."/>
            <person name="Gwinn M.L."/>
            <person name="Nelson W.C."/>
            <person name="DeBoy R.T."/>
            <person name="Kolonay J.F."/>
            <person name="McClarty G."/>
            <person name="Salzberg S.L."/>
            <person name="Eisen J.A."/>
            <person name="Fraser C.M."/>
        </authorList>
    </citation>
    <scope>NUCLEOTIDE SEQUENCE [LARGE SCALE GENOMIC DNA]</scope>
    <source>
        <strain>MoPn / Nigg</strain>
    </source>
</reference>
<protein>
    <recommendedName>
        <fullName evidence="1">dITP/XTP pyrophosphatase</fullName>
        <ecNumber evidence="1">3.6.1.66</ecNumber>
    </recommendedName>
    <alternativeName>
        <fullName evidence="1">Non-canonical purine NTP pyrophosphatase</fullName>
    </alternativeName>
    <alternativeName>
        <fullName evidence="1">Non-standard purine NTP pyrophosphatase</fullName>
    </alternativeName>
    <alternativeName>
        <fullName evidence="1">Nucleoside-triphosphate diphosphatase</fullName>
    </alternativeName>
    <alternativeName>
        <fullName evidence="1">Nucleoside-triphosphate pyrophosphatase</fullName>
        <shortName evidence="1">NTPase</shortName>
    </alternativeName>
</protein>
<name>IXTPA_CHLMU</name>
<accession>Q9PJD4</accession>
<organism>
    <name type="scientific">Chlamydia muridarum (strain MoPn / Nigg)</name>
    <dbReference type="NCBI Taxonomy" id="243161"/>
    <lineage>
        <taxon>Bacteria</taxon>
        <taxon>Pseudomonadati</taxon>
        <taxon>Chlamydiota</taxon>
        <taxon>Chlamydiia</taxon>
        <taxon>Chlamydiales</taxon>
        <taxon>Chlamydiaceae</taxon>
        <taxon>Chlamydia/Chlamydophila group</taxon>
        <taxon>Chlamydia</taxon>
    </lineage>
</organism>
<dbReference type="EC" id="3.6.1.66" evidence="1"/>
<dbReference type="EMBL" id="AE002160">
    <property type="protein sequence ID" value="AAF39689.1"/>
    <property type="molecule type" value="Genomic_DNA"/>
</dbReference>
<dbReference type="PIR" id="H81651">
    <property type="entry name" value="H81651"/>
</dbReference>
<dbReference type="RefSeq" id="WP_010231873.1">
    <property type="nucleotide sequence ID" value="NZ_CP063055.1"/>
</dbReference>
<dbReference type="SMR" id="Q9PJD4"/>
<dbReference type="GeneID" id="1246264"/>
<dbReference type="KEGG" id="cmu:TC_0895"/>
<dbReference type="eggNOG" id="COG0127">
    <property type="taxonomic scope" value="Bacteria"/>
</dbReference>
<dbReference type="HOGENOM" id="CLU_082080_0_2_0"/>
<dbReference type="OrthoDB" id="9807456at2"/>
<dbReference type="Proteomes" id="UP000000800">
    <property type="component" value="Chromosome"/>
</dbReference>
<dbReference type="GO" id="GO:0005829">
    <property type="term" value="C:cytosol"/>
    <property type="evidence" value="ECO:0007669"/>
    <property type="project" value="TreeGrafter"/>
</dbReference>
<dbReference type="GO" id="GO:0035870">
    <property type="term" value="F:dITP diphosphatase activity"/>
    <property type="evidence" value="ECO:0007669"/>
    <property type="project" value="RHEA"/>
</dbReference>
<dbReference type="GO" id="GO:0036220">
    <property type="term" value="F:ITP diphosphatase activity"/>
    <property type="evidence" value="ECO:0007669"/>
    <property type="project" value="UniProtKB-EC"/>
</dbReference>
<dbReference type="GO" id="GO:0046872">
    <property type="term" value="F:metal ion binding"/>
    <property type="evidence" value="ECO:0007669"/>
    <property type="project" value="UniProtKB-KW"/>
</dbReference>
<dbReference type="GO" id="GO:0000166">
    <property type="term" value="F:nucleotide binding"/>
    <property type="evidence" value="ECO:0007669"/>
    <property type="project" value="UniProtKB-KW"/>
</dbReference>
<dbReference type="GO" id="GO:0017111">
    <property type="term" value="F:ribonucleoside triphosphate phosphatase activity"/>
    <property type="evidence" value="ECO:0007669"/>
    <property type="project" value="InterPro"/>
</dbReference>
<dbReference type="GO" id="GO:0036222">
    <property type="term" value="F:XTP diphosphatase activity"/>
    <property type="evidence" value="ECO:0007669"/>
    <property type="project" value="RHEA"/>
</dbReference>
<dbReference type="GO" id="GO:0009117">
    <property type="term" value="P:nucleotide metabolic process"/>
    <property type="evidence" value="ECO:0007669"/>
    <property type="project" value="UniProtKB-KW"/>
</dbReference>
<dbReference type="GO" id="GO:0009146">
    <property type="term" value="P:purine nucleoside triphosphate catabolic process"/>
    <property type="evidence" value="ECO:0007669"/>
    <property type="project" value="UniProtKB-UniRule"/>
</dbReference>
<dbReference type="CDD" id="cd00515">
    <property type="entry name" value="HAM1"/>
    <property type="match status" value="1"/>
</dbReference>
<dbReference type="FunFam" id="3.90.950.10:FF:000001">
    <property type="entry name" value="dITP/XTP pyrophosphatase"/>
    <property type="match status" value="1"/>
</dbReference>
<dbReference type="Gene3D" id="3.90.950.10">
    <property type="match status" value="1"/>
</dbReference>
<dbReference type="HAMAP" id="MF_01405">
    <property type="entry name" value="Non_canon_purine_NTPase"/>
    <property type="match status" value="1"/>
</dbReference>
<dbReference type="InterPro" id="IPR020922">
    <property type="entry name" value="dITP/XTP_pyrophosphatase"/>
</dbReference>
<dbReference type="InterPro" id="IPR029001">
    <property type="entry name" value="ITPase-like_fam"/>
</dbReference>
<dbReference type="InterPro" id="IPR002637">
    <property type="entry name" value="RdgB/HAM1"/>
</dbReference>
<dbReference type="PANTHER" id="PTHR11067:SF9">
    <property type="entry name" value="INOSINE TRIPHOSPHATE PYROPHOSPHATASE"/>
    <property type="match status" value="1"/>
</dbReference>
<dbReference type="PANTHER" id="PTHR11067">
    <property type="entry name" value="INOSINE TRIPHOSPHATE PYROPHOSPHATASE/HAM1 PROTEIN"/>
    <property type="match status" value="1"/>
</dbReference>
<dbReference type="Pfam" id="PF01725">
    <property type="entry name" value="Ham1p_like"/>
    <property type="match status" value="1"/>
</dbReference>
<dbReference type="SUPFAM" id="SSF52972">
    <property type="entry name" value="ITPase-like"/>
    <property type="match status" value="1"/>
</dbReference>
<sequence>MKILIASSHGYKVRETKAFLKKIGEFDIFSLVDYPSYTPPKETGETPEENAIQKGVFAAQTFRCWTIADDSMLIIPALGGLPGKLSASFSGEHASDKDHRKKLLEEMLLLENPIDRSAYFECCVVLVSPFGKIFKAHASCEGTIVFKERGSSGFGYDPLFSKHDYKQTYAELPEEIKNQVSHRAKALAKLQPYVEMAFANHLLARNESL</sequence>